<organism>
    <name type="scientific">Homo sapiens</name>
    <name type="common">Human</name>
    <dbReference type="NCBI Taxonomy" id="9606"/>
    <lineage>
        <taxon>Eukaryota</taxon>
        <taxon>Metazoa</taxon>
        <taxon>Chordata</taxon>
        <taxon>Craniata</taxon>
        <taxon>Vertebrata</taxon>
        <taxon>Euteleostomi</taxon>
        <taxon>Mammalia</taxon>
        <taxon>Eutheria</taxon>
        <taxon>Euarchontoglires</taxon>
        <taxon>Primates</taxon>
        <taxon>Haplorrhini</taxon>
        <taxon>Catarrhini</taxon>
        <taxon>Hominidae</taxon>
        <taxon>Homo</taxon>
    </lineage>
</organism>
<reference key="1">
    <citation type="journal article" date="1998" name="J. Biol. Chem.">
        <title>Purification and cloning of PZR, a binding protein and putative physiological substrate of tyrosine phosphatase SHP-2.</title>
        <authorList>
            <person name="Zhao Z.J."/>
            <person name="Zhao R."/>
        </authorList>
    </citation>
    <scope>NUCLEOTIDE SEQUENCE [MRNA] (ISOFORMS 1 AND 3)</scope>
    <scope>PROTEIN SEQUENCE OF 105-115; 139-157; 198-213 AND 229-254</scope>
    <scope>PHOSPHORYLATION</scope>
    <scope>GLYCOSYLATION</scope>
    <scope>INTERACTION WITH PTPN11</scope>
    <scope>TISSUE SPECIFICITY</scope>
</reference>
<reference key="2">
    <citation type="journal article" date="2000" name="Sheng Wu Hua Xue Yu Sheng Wu Wu Li Xue Bao">
        <title>Cloning of human myelin protein zero-like genes by bioinformatics strategy.</title>
        <authorList>
            <person name="Tang D.S."/>
            <person name="Yu K.P."/>
            <person name="Tang X.X."/>
            <person name="Zhang H.L."/>
            <person name="Pan Q."/>
            <person name="Dai H.P."/>
            <person name="Xia J.H."/>
        </authorList>
    </citation>
    <scope>NUCLEOTIDE SEQUENCE [MRNA] (ISOFORMS 1 AND 4)</scope>
    <source>
        <tissue>Fetal liver</tissue>
    </source>
</reference>
<reference key="3">
    <citation type="journal article" date="2003" name="Biochem. Biophys. Res. Commun.">
        <title>Identification of a variant form of PZR lacking immunoreceptor tyrosine-based inhibitory motifs.</title>
        <authorList>
            <person name="Zhao R."/>
            <person name="Zhao Z.J."/>
        </authorList>
    </citation>
    <scope>NUCLEOTIDE SEQUENCE [MRNA] (ISOFORM 3)</scope>
    <scope>FUNCTION (ISOFORM 3)</scope>
    <scope>TISSUE SPECIFICITY</scope>
</reference>
<reference key="4">
    <citation type="journal article" date="2003" name="Biochem. J.">
        <title>Novel mesenchymal and haematopoietic cell isoforms of the SHP-2 docking receptor, PZR: identification, molecular cloning and effects on cell migration.</title>
        <authorList>
            <person name="Zannettino A.C.W."/>
            <person name="Roubelakis M."/>
            <person name="Welldon K.J."/>
            <person name="Jackson D.E."/>
            <person name="Simmons P.J."/>
            <person name="Bendall L.J."/>
            <person name="Henniker A."/>
            <person name="Harrison K.L."/>
            <person name="Niutta S."/>
            <person name="Bradstock K.F."/>
            <person name="Watt S.M."/>
        </authorList>
    </citation>
    <scope>NUCLEOTIDE SEQUENCE [GENOMIC DNA / MRNA]</scope>
    <scope>ALTERNATIVE SPLICING (ISOFORMS 2 AND 3)</scope>
    <scope>FUNCTION</scope>
    <scope>TISSUE SPECIFICITY</scope>
</reference>
<reference key="5">
    <citation type="journal article" date="2003" name="Genome Res.">
        <title>The secreted protein discovery initiative (SPDI), a large-scale effort to identify novel human secreted and transmembrane proteins: a bioinformatics assessment.</title>
        <authorList>
            <person name="Clark H.F."/>
            <person name="Gurney A.L."/>
            <person name="Abaya E."/>
            <person name="Baker K."/>
            <person name="Baldwin D.T."/>
            <person name="Brush J."/>
            <person name="Chen J."/>
            <person name="Chow B."/>
            <person name="Chui C."/>
            <person name="Crowley C."/>
            <person name="Currell B."/>
            <person name="Deuel B."/>
            <person name="Dowd P."/>
            <person name="Eaton D."/>
            <person name="Foster J.S."/>
            <person name="Grimaldi C."/>
            <person name="Gu Q."/>
            <person name="Hass P.E."/>
            <person name="Heldens S."/>
            <person name="Huang A."/>
            <person name="Kim H.S."/>
            <person name="Klimowski L."/>
            <person name="Jin Y."/>
            <person name="Johnson S."/>
            <person name="Lee J."/>
            <person name="Lewis L."/>
            <person name="Liao D."/>
            <person name="Mark M.R."/>
            <person name="Robbie E."/>
            <person name="Sanchez C."/>
            <person name="Schoenfeld J."/>
            <person name="Seshagiri S."/>
            <person name="Simmons L."/>
            <person name="Singh J."/>
            <person name="Smith V."/>
            <person name="Stinson J."/>
            <person name="Vagts A."/>
            <person name="Vandlen R.L."/>
            <person name="Watanabe C."/>
            <person name="Wieand D."/>
            <person name="Woods K."/>
            <person name="Xie M.-H."/>
            <person name="Yansura D.G."/>
            <person name="Yi S."/>
            <person name="Yu G."/>
            <person name="Yuan J."/>
            <person name="Zhang M."/>
            <person name="Zhang Z."/>
            <person name="Goddard A.D."/>
            <person name="Wood W.I."/>
            <person name="Godowski P.J."/>
            <person name="Gray A.M."/>
        </authorList>
    </citation>
    <scope>NUCLEOTIDE SEQUENCE [LARGE SCALE MRNA] (ISOFORM 1)</scope>
</reference>
<reference key="6">
    <citation type="journal article" date="2004" name="Nat. Genet.">
        <title>Complete sequencing and characterization of 21,243 full-length human cDNAs.</title>
        <authorList>
            <person name="Ota T."/>
            <person name="Suzuki Y."/>
            <person name="Nishikawa T."/>
            <person name="Otsuki T."/>
            <person name="Sugiyama T."/>
            <person name="Irie R."/>
            <person name="Wakamatsu A."/>
            <person name="Hayashi K."/>
            <person name="Sato H."/>
            <person name="Nagai K."/>
            <person name="Kimura K."/>
            <person name="Makita H."/>
            <person name="Sekine M."/>
            <person name="Obayashi M."/>
            <person name="Nishi T."/>
            <person name="Shibahara T."/>
            <person name="Tanaka T."/>
            <person name="Ishii S."/>
            <person name="Yamamoto J."/>
            <person name="Saito K."/>
            <person name="Kawai Y."/>
            <person name="Isono Y."/>
            <person name="Nakamura Y."/>
            <person name="Nagahari K."/>
            <person name="Murakami K."/>
            <person name="Yasuda T."/>
            <person name="Iwayanagi T."/>
            <person name="Wagatsuma M."/>
            <person name="Shiratori A."/>
            <person name="Sudo H."/>
            <person name="Hosoiri T."/>
            <person name="Kaku Y."/>
            <person name="Kodaira H."/>
            <person name="Kondo H."/>
            <person name="Sugawara M."/>
            <person name="Takahashi M."/>
            <person name="Kanda K."/>
            <person name="Yokoi T."/>
            <person name="Furuya T."/>
            <person name="Kikkawa E."/>
            <person name="Omura Y."/>
            <person name="Abe K."/>
            <person name="Kamihara K."/>
            <person name="Katsuta N."/>
            <person name="Sato K."/>
            <person name="Tanikawa M."/>
            <person name="Yamazaki M."/>
            <person name="Ninomiya K."/>
            <person name="Ishibashi T."/>
            <person name="Yamashita H."/>
            <person name="Murakawa K."/>
            <person name="Fujimori K."/>
            <person name="Tanai H."/>
            <person name="Kimata M."/>
            <person name="Watanabe M."/>
            <person name="Hiraoka S."/>
            <person name="Chiba Y."/>
            <person name="Ishida S."/>
            <person name="Ono Y."/>
            <person name="Takiguchi S."/>
            <person name="Watanabe S."/>
            <person name="Yosida M."/>
            <person name="Hotuta T."/>
            <person name="Kusano J."/>
            <person name="Kanehori K."/>
            <person name="Takahashi-Fujii A."/>
            <person name="Hara H."/>
            <person name="Tanase T.-O."/>
            <person name="Nomura Y."/>
            <person name="Togiya S."/>
            <person name="Komai F."/>
            <person name="Hara R."/>
            <person name="Takeuchi K."/>
            <person name="Arita M."/>
            <person name="Imose N."/>
            <person name="Musashino K."/>
            <person name="Yuuki H."/>
            <person name="Oshima A."/>
            <person name="Sasaki N."/>
            <person name="Aotsuka S."/>
            <person name="Yoshikawa Y."/>
            <person name="Matsunawa H."/>
            <person name="Ichihara T."/>
            <person name="Shiohata N."/>
            <person name="Sano S."/>
            <person name="Moriya S."/>
            <person name="Momiyama H."/>
            <person name="Satoh N."/>
            <person name="Takami S."/>
            <person name="Terashima Y."/>
            <person name="Suzuki O."/>
            <person name="Nakagawa S."/>
            <person name="Senoh A."/>
            <person name="Mizoguchi H."/>
            <person name="Goto Y."/>
            <person name="Shimizu F."/>
            <person name="Wakebe H."/>
            <person name="Hishigaki H."/>
            <person name="Watanabe T."/>
            <person name="Sugiyama A."/>
            <person name="Takemoto M."/>
            <person name="Kawakami B."/>
            <person name="Yamazaki M."/>
            <person name="Watanabe K."/>
            <person name="Kumagai A."/>
            <person name="Itakura S."/>
            <person name="Fukuzumi Y."/>
            <person name="Fujimori Y."/>
            <person name="Komiyama M."/>
            <person name="Tashiro H."/>
            <person name="Tanigami A."/>
            <person name="Fujiwara T."/>
            <person name="Ono T."/>
            <person name="Yamada K."/>
            <person name="Fujii Y."/>
            <person name="Ozaki K."/>
            <person name="Hirao M."/>
            <person name="Ohmori Y."/>
            <person name="Kawabata A."/>
            <person name="Hikiji T."/>
            <person name="Kobatake N."/>
            <person name="Inagaki H."/>
            <person name="Ikema Y."/>
            <person name="Okamoto S."/>
            <person name="Okitani R."/>
            <person name="Kawakami T."/>
            <person name="Noguchi S."/>
            <person name="Itoh T."/>
            <person name="Shigeta K."/>
            <person name="Senba T."/>
            <person name="Matsumura K."/>
            <person name="Nakajima Y."/>
            <person name="Mizuno T."/>
            <person name="Morinaga M."/>
            <person name="Sasaki M."/>
            <person name="Togashi T."/>
            <person name="Oyama M."/>
            <person name="Hata H."/>
            <person name="Watanabe M."/>
            <person name="Komatsu T."/>
            <person name="Mizushima-Sugano J."/>
            <person name="Satoh T."/>
            <person name="Shirai Y."/>
            <person name="Takahashi Y."/>
            <person name="Nakagawa K."/>
            <person name="Okumura K."/>
            <person name="Nagase T."/>
            <person name="Nomura N."/>
            <person name="Kikuchi H."/>
            <person name="Masuho Y."/>
            <person name="Yamashita R."/>
            <person name="Nakai K."/>
            <person name="Yada T."/>
            <person name="Nakamura Y."/>
            <person name="Ohara O."/>
            <person name="Isogai T."/>
            <person name="Sugano S."/>
        </authorList>
    </citation>
    <scope>NUCLEOTIDE SEQUENCE [LARGE SCALE MRNA] (ISOFORM 5)</scope>
</reference>
<reference key="7">
    <citation type="submission" date="2004-06" db="EMBL/GenBank/DDBJ databases">
        <title>Cloning of human full open reading frames in Gateway(TM) system entry vector (pDONR201).</title>
        <authorList>
            <person name="Halleck A."/>
            <person name="Ebert L."/>
            <person name="Mkoundinya M."/>
            <person name="Schick M."/>
            <person name="Eisenstein S."/>
            <person name="Neubert P."/>
            <person name="Kstrang K."/>
            <person name="Schatten R."/>
            <person name="Shen B."/>
            <person name="Henze S."/>
            <person name="Mar W."/>
            <person name="Korn B."/>
            <person name="Zuo D."/>
            <person name="Hu Y."/>
            <person name="LaBaer J."/>
        </authorList>
    </citation>
    <scope>NUCLEOTIDE SEQUENCE [LARGE SCALE MRNA]</scope>
</reference>
<reference key="8">
    <citation type="journal article" date="2006" name="Nature">
        <title>The DNA sequence and biological annotation of human chromosome 1.</title>
        <authorList>
            <person name="Gregory S.G."/>
            <person name="Barlow K.F."/>
            <person name="McLay K.E."/>
            <person name="Kaul R."/>
            <person name="Swarbreck D."/>
            <person name="Dunham A."/>
            <person name="Scott C.E."/>
            <person name="Howe K.L."/>
            <person name="Woodfine K."/>
            <person name="Spencer C.C.A."/>
            <person name="Jones M.C."/>
            <person name="Gillson C."/>
            <person name="Searle S."/>
            <person name="Zhou Y."/>
            <person name="Kokocinski F."/>
            <person name="McDonald L."/>
            <person name="Evans R."/>
            <person name="Phillips K."/>
            <person name="Atkinson A."/>
            <person name="Cooper R."/>
            <person name="Jones C."/>
            <person name="Hall R.E."/>
            <person name="Andrews T.D."/>
            <person name="Lloyd C."/>
            <person name="Ainscough R."/>
            <person name="Almeida J.P."/>
            <person name="Ambrose K.D."/>
            <person name="Anderson F."/>
            <person name="Andrew R.W."/>
            <person name="Ashwell R.I.S."/>
            <person name="Aubin K."/>
            <person name="Babbage A.K."/>
            <person name="Bagguley C.L."/>
            <person name="Bailey J."/>
            <person name="Beasley H."/>
            <person name="Bethel G."/>
            <person name="Bird C.P."/>
            <person name="Bray-Allen S."/>
            <person name="Brown J.Y."/>
            <person name="Brown A.J."/>
            <person name="Buckley D."/>
            <person name="Burton J."/>
            <person name="Bye J."/>
            <person name="Carder C."/>
            <person name="Chapman J.C."/>
            <person name="Clark S.Y."/>
            <person name="Clarke G."/>
            <person name="Clee C."/>
            <person name="Cobley V."/>
            <person name="Collier R.E."/>
            <person name="Corby N."/>
            <person name="Coville G.J."/>
            <person name="Davies J."/>
            <person name="Deadman R."/>
            <person name="Dunn M."/>
            <person name="Earthrowl M."/>
            <person name="Ellington A.G."/>
            <person name="Errington H."/>
            <person name="Frankish A."/>
            <person name="Frankland J."/>
            <person name="French L."/>
            <person name="Garner P."/>
            <person name="Garnett J."/>
            <person name="Gay L."/>
            <person name="Ghori M.R.J."/>
            <person name="Gibson R."/>
            <person name="Gilby L.M."/>
            <person name="Gillett W."/>
            <person name="Glithero R.J."/>
            <person name="Grafham D.V."/>
            <person name="Griffiths C."/>
            <person name="Griffiths-Jones S."/>
            <person name="Grocock R."/>
            <person name="Hammond S."/>
            <person name="Harrison E.S.I."/>
            <person name="Hart E."/>
            <person name="Haugen E."/>
            <person name="Heath P.D."/>
            <person name="Holmes S."/>
            <person name="Holt K."/>
            <person name="Howden P.J."/>
            <person name="Hunt A.R."/>
            <person name="Hunt S.E."/>
            <person name="Hunter G."/>
            <person name="Isherwood J."/>
            <person name="James R."/>
            <person name="Johnson C."/>
            <person name="Johnson D."/>
            <person name="Joy A."/>
            <person name="Kay M."/>
            <person name="Kershaw J.K."/>
            <person name="Kibukawa M."/>
            <person name="Kimberley A.M."/>
            <person name="King A."/>
            <person name="Knights A.J."/>
            <person name="Lad H."/>
            <person name="Laird G."/>
            <person name="Lawlor S."/>
            <person name="Leongamornlert D.A."/>
            <person name="Lloyd D.M."/>
            <person name="Loveland J."/>
            <person name="Lovell J."/>
            <person name="Lush M.J."/>
            <person name="Lyne R."/>
            <person name="Martin S."/>
            <person name="Mashreghi-Mohammadi M."/>
            <person name="Matthews L."/>
            <person name="Matthews N.S.W."/>
            <person name="McLaren S."/>
            <person name="Milne S."/>
            <person name="Mistry S."/>
            <person name="Moore M.J.F."/>
            <person name="Nickerson T."/>
            <person name="O'Dell C.N."/>
            <person name="Oliver K."/>
            <person name="Palmeiri A."/>
            <person name="Palmer S.A."/>
            <person name="Parker A."/>
            <person name="Patel D."/>
            <person name="Pearce A.V."/>
            <person name="Peck A.I."/>
            <person name="Pelan S."/>
            <person name="Phelps K."/>
            <person name="Phillimore B.J."/>
            <person name="Plumb R."/>
            <person name="Rajan J."/>
            <person name="Raymond C."/>
            <person name="Rouse G."/>
            <person name="Saenphimmachak C."/>
            <person name="Sehra H.K."/>
            <person name="Sheridan E."/>
            <person name="Shownkeen R."/>
            <person name="Sims S."/>
            <person name="Skuce C.D."/>
            <person name="Smith M."/>
            <person name="Steward C."/>
            <person name="Subramanian S."/>
            <person name="Sycamore N."/>
            <person name="Tracey A."/>
            <person name="Tromans A."/>
            <person name="Van Helmond Z."/>
            <person name="Wall M."/>
            <person name="Wallis J.M."/>
            <person name="White S."/>
            <person name="Whitehead S.L."/>
            <person name="Wilkinson J.E."/>
            <person name="Willey D.L."/>
            <person name="Williams H."/>
            <person name="Wilming L."/>
            <person name="Wray P.W."/>
            <person name="Wu Z."/>
            <person name="Coulson A."/>
            <person name="Vaudin M."/>
            <person name="Sulston J.E."/>
            <person name="Durbin R.M."/>
            <person name="Hubbard T."/>
            <person name="Wooster R."/>
            <person name="Dunham I."/>
            <person name="Carter N.P."/>
            <person name="McVean G."/>
            <person name="Ross M.T."/>
            <person name="Harrow J."/>
            <person name="Olson M.V."/>
            <person name="Beck S."/>
            <person name="Rogers J."/>
            <person name="Bentley D.R."/>
        </authorList>
    </citation>
    <scope>NUCLEOTIDE SEQUENCE [LARGE SCALE GENOMIC DNA]</scope>
</reference>
<reference key="9">
    <citation type="submission" date="2005-07" db="EMBL/GenBank/DDBJ databases">
        <authorList>
            <person name="Mural R.J."/>
            <person name="Istrail S."/>
            <person name="Sutton G.G."/>
            <person name="Florea L."/>
            <person name="Halpern A.L."/>
            <person name="Mobarry C.M."/>
            <person name="Lippert R."/>
            <person name="Walenz B."/>
            <person name="Shatkay H."/>
            <person name="Dew I."/>
            <person name="Miller J.R."/>
            <person name="Flanigan M.J."/>
            <person name="Edwards N.J."/>
            <person name="Bolanos R."/>
            <person name="Fasulo D."/>
            <person name="Halldorsson B.V."/>
            <person name="Hannenhalli S."/>
            <person name="Turner R."/>
            <person name="Yooseph S."/>
            <person name="Lu F."/>
            <person name="Nusskern D.R."/>
            <person name="Shue B.C."/>
            <person name="Zheng X.H."/>
            <person name="Zhong F."/>
            <person name="Delcher A.L."/>
            <person name="Huson D.H."/>
            <person name="Kravitz S.A."/>
            <person name="Mouchard L."/>
            <person name="Reinert K."/>
            <person name="Remington K.A."/>
            <person name="Clark A.G."/>
            <person name="Waterman M.S."/>
            <person name="Eichler E.E."/>
            <person name="Adams M.D."/>
            <person name="Hunkapiller M.W."/>
            <person name="Myers E.W."/>
            <person name="Venter J.C."/>
        </authorList>
    </citation>
    <scope>NUCLEOTIDE SEQUENCE [LARGE SCALE GENOMIC DNA]</scope>
</reference>
<reference key="10">
    <citation type="journal article" date="2004" name="Genome Res.">
        <title>The status, quality, and expansion of the NIH full-length cDNA project: the Mammalian Gene Collection (MGC).</title>
        <authorList>
            <consortium name="The MGC Project Team"/>
        </authorList>
    </citation>
    <scope>NUCLEOTIDE SEQUENCE [LARGE SCALE MRNA] (ISOFORM 1)</scope>
    <source>
        <tissue>Ovary</tissue>
    </source>
</reference>
<reference key="11">
    <citation type="journal article" date="2000" name="J. Biol. Chem.">
        <title>Dissecting the interaction of SHP-2 with PZR, an immunoglobulin family protein containing immunoreceptor tyrosine-based inhibitory motifs.</title>
        <authorList>
            <person name="Zhao R."/>
            <person name="Zhao Z.J."/>
        </authorList>
    </citation>
    <scope>PHOSPHORYLATION AT TYR-241 AND TYR-263</scope>
    <scope>INTERACTION WITH PTPN11</scope>
    <scope>DEPHOSPHORYLATION BY PTPN11</scope>
    <scope>MUTAGENESIS OF TYR-241 AND TYR-263</scope>
</reference>
<reference key="12">
    <citation type="journal article" date="2002" name="J. Biol. Chem.">
        <title>Cell surface glycoprotein PZR is a major mediator of concanavalin A-induced cell signaling.</title>
        <authorList>
            <person name="Zhao R."/>
            <person name="Guerrah A."/>
            <person name="Tang H."/>
            <person name="Zhao Z.J."/>
        </authorList>
    </citation>
    <scope>FUNCTION</scope>
    <scope>GLYCOSYLATION</scope>
    <scope>PHOSPHORYLATION</scope>
</reference>
<reference key="13">
    <citation type="journal article" date="2006" name="Cell">
        <title>Global, in vivo, and site-specific phosphorylation dynamics in signaling networks.</title>
        <authorList>
            <person name="Olsen J.V."/>
            <person name="Blagoev B."/>
            <person name="Gnad F."/>
            <person name="Macek B."/>
            <person name="Kumar C."/>
            <person name="Mortensen P."/>
            <person name="Mann M."/>
        </authorList>
    </citation>
    <scope>IDENTIFICATION BY MASS SPECTROMETRY [LARGE SCALE ANALYSIS]</scope>
    <source>
        <tissue>Cervix carcinoma</tissue>
    </source>
</reference>
<reference key="14">
    <citation type="journal article" date="2008" name="Mol. Cell">
        <title>Kinase-selective enrichment enables quantitative phosphoproteomics of the kinome across the cell cycle.</title>
        <authorList>
            <person name="Daub H."/>
            <person name="Olsen J.V."/>
            <person name="Bairlein M."/>
            <person name="Gnad F."/>
            <person name="Oppermann F.S."/>
            <person name="Korner R."/>
            <person name="Greff Z."/>
            <person name="Keri G."/>
            <person name="Stemmann O."/>
            <person name="Mann M."/>
        </authorList>
    </citation>
    <scope>IDENTIFICATION BY MASS SPECTROMETRY [LARGE SCALE ANALYSIS]</scope>
    <source>
        <tissue>Cervix carcinoma</tissue>
    </source>
</reference>
<reference key="15">
    <citation type="journal article" date="2008" name="Proc. Natl. Acad. Sci. U.S.A.">
        <title>A quantitative atlas of mitotic phosphorylation.</title>
        <authorList>
            <person name="Dephoure N."/>
            <person name="Zhou C."/>
            <person name="Villen J."/>
            <person name="Beausoleil S.A."/>
            <person name="Bakalarski C.E."/>
            <person name="Elledge S.J."/>
            <person name="Gygi S.P."/>
        </authorList>
    </citation>
    <scope>PHOSPHORYLATION [LARGE SCALE ANALYSIS] AT SER-208; SER-210; SER-219; SER-260 AND TYR-263</scope>
    <scope>IDENTIFICATION BY MASS SPECTROMETRY [LARGE SCALE ANALYSIS]</scope>
    <source>
        <tissue>Cervix carcinoma</tissue>
    </source>
</reference>
<reference key="16">
    <citation type="journal article" date="2009" name="Nat. Biotechnol.">
        <title>Mass-spectrometric identification and relative quantification of N-linked cell surface glycoproteins.</title>
        <authorList>
            <person name="Wollscheid B."/>
            <person name="Bausch-Fluck D."/>
            <person name="Henderson C."/>
            <person name="O'Brien R."/>
            <person name="Bibel M."/>
            <person name="Schiess R."/>
            <person name="Aebersold R."/>
            <person name="Watts J.D."/>
        </authorList>
    </citation>
    <scope>GLYCOSYLATION [LARGE SCALE ANALYSIS] AT ASN-50</scope>
    <source>
        <tissue>Leukemic T-cell</tissue>
    </source>
</reference>
<reference key="17">
    <citation type="journal article" date="2009" name="Sci. Signal.">
        <title>Quantitative phosphoproteomic analysis of T cell receptor signaling reveals system-wide modulation of protein-protein interactions.</title>
        <authorList>
            <person name="Mayya V."/>
            <person name="Lundgren D.H."/>
            <person name="Hwang S.-I."/>
            <person name="Rezaul K."/>
            <person name="Wu L."/>
            <person name="Eng J.K."/>
            <person name="Rodionov V."/>
            <person name="Han D.K."/>
        </authorList>
    </citation>
    <scope>PHOSPHORYLATION [LARGE SCALE ANALYSIS] AT TYR-241 AND TYR-263</scope>
    <scope>IDENTIFICATION BY MASS SPECTROMETRY [LARGE SCALE ANALYSIS]</scope>
    <source>
        <tissue>Leukemic T-cell</tissue>
    </source>
</reference>
<reference key="18">
    <citation type="journal article" date="2010" name="Sci. Signal.">
        <title>Quantitative phosphoproteomics reveals widespread full phosphorylation site occupancy during mitosis.</title>
        <authorList>
            <person name="Olsen J.V."/>
            <person name="Vermeulen M."/>
            <person name="Santamaria A."/>
            <person name="Kumar C."/>
            <person name="Miller M.L."/>
            <person name="Jensen L.J."/>
            <person name="Gnad F."/>
            <person name="Cox J."/>
            <person name="Jensen T.S."/>
            <person name="Nigg E.A."/>
            <person name="Brunak S."/>
            <person name="Mann M."/>
        </authorList>
    </citation>
    <scope>PHOSPHORYLATION [LARGE SCALE ANALYSIS] AT SER-210; SER-219; SER-221 AND TYR-263</scope>
    <scope>IDENTIFICATION BY MASS SPECTROMETRY [LARGE SCALE ANALYSIS]</scope>
    <source>
        <tissue>Cervix carcinoma</tissue>
    </source>
</reference>
<reference key="19">
    <citation type="journal article" date="2011" name="BMC Syst. Biol.">
        <title>Initial characterization of the human central proteome.</title>
        <authorList>
            <person name="Burkard T.R."/>
            <person name="Planyavsky M."/>
            <person name="Kaupe I."/>
            <person name="Breitwieser F.P."/>
            <person name="Buerckstuemmer T."/>
            <person name="Bennett K.L."/>
            <person name="Superti-Furga G."/>
            <person name="Colinge J."/>
        </authorList>
    </citation>
    <scope>IDENTIFICATION BY MASS SPECTROMETRY [LARGE SCALE ANALYSIS]</scope>
</reference>
<reference key="20">
    <citation type="journal article" date="2011" name="Sci. Signal.">
        <title>System-wide temporal characterization of the proteome and phosphoproteome of human embryonic stem cell differentiation.</title>
        <authorList>
            <person name="Rigbolt K.T."/>
            <person name="Prokhorova T.A."/>
            <person name="Akimov V."/>
            <person name="Henningsen J."/>
            <person name="Johansen P.T."/>
            <person name="Kratchmarova I."/>
            <person name="Kassem M."/>
            <person name="Mann M."/>
            <person name="Olsen J.V."/>
            <person name="Blagoev B."/>
        </authorList>
    </citation>
    <scope>PHOSPHORYLATION [LARGE SCALE ANALYSIS] AT SER-210 AND SER-221</scope>
    <scope>IDENTIFICATION BY MASS SPECTROMETRY [LARGE SCALE ANALYSIS]</scope>
</reference>
<reference key="21">
    <citation type="journal article" date="2013" name="J. Proteome Res.">
        <title>Toward a comprehensive characterization of a human cancer cell phosphoproteome.</title>
        <authorList>
            <person name="Zhou H."/>
            <person name="Di Palma S."/>
            <person name="Preisinger C."/>
            <person name="Peng M."/>
            <person name="Polat A.N."/>
            <person name="Heck A.J."/>
            <person name="Mohammed S."/>
        </authorList>
    </citation>
    <scope>PHOSPHORYLATION [LARGE SCALE ANALYSIS] AT SER-204; SER-206; SER-208; SER-210; SER-219; SER-221; SER-260 AND TYR-263</scope>
    <scope>IDENTIFICATION BY MASS SPECTROMETRY [LARGE SCALE ANALYSIS]</scope>
    <source>
        <tissue>Cervix carcinoma</tissue>
        <tissue>Erythroleukemia</tissue>
    </source>
</reference>
<reference key="22">
    <citation type="journal article" date="2015" name="Proteomics">
        <title>N-terminome analysis of the human mitochondrial proteome.</title>
        <authorList>
            <person name="Vaca Jacome A.S."/>
            <person name="Rabilloud T."/>
            <person name="Schaeffer-Reiss C."/>
            <person name="Rompais M."/>
            <person name="Ayoub D."/>
            <person name="Lane L."/>
            <person name="Bairoch A."/>
            <person name="Van Dorsselaer A."/>
            <person name="Carapito C."/>
        </authorList>
    </citation>
    <scope>IDENTIFICATION BY MASS SPECTROMETRY [LARGE SCALE ANALYSIS]</scope>
</reference>
<reference evidence="16 17 18" key="23">
    <citation type="journal article" date="2018" name="Biochem. Biophys. Res. Commun.">
        <title>Structural and biochemical studies of the extracellular domain of Myelin protein zero-like protein 1.</title>
        <authorList>
            <person name="Yu T."/>
            <person name="Liang L."/>
            <person name="Zhao X."/>
            <person name="Yin Y."/>
        </authorList>
    </citation>
    <scope>X-RAY CRYSTALLOGRAPHY (1.98 ANGSTROMS) OF 36-162</scope>
    <scope>GLYCOSYLATION AT ASN-50 AND ASN-130</scope>
    <scope>IDENTIFICATION BY MASS SPECTROMETRY</scope>
    <scope>DISULFIDE BONDS</scope>
</reference>
<comment type="function">
    <text evidence="5 6">Cell surface receptor, which is involved in signal transduction processes. Recruits PTPN11/SHP-2 to the cell membrane and is a putative substrate of PTPN11/SHP-2. Is a major receptor for concanavalin-A (ConA) and is involved in cellular signaling induced by ConA, which probably includes Src family tyrosine-protein kinases. Isoform 3 seems to have a dominant negative role; it blocks tyrosine phosphorylation of MPZL1 induced by ConA. Isoform 1, but not isoform 2 and isoform 3, may be involved in regulation of integrin-mediated cell motility.</text>
</comment>
<comment type="subunit">
    <text evidence="4 10">Interacts with phosphorylated PTPN11/SHP-2.</text>
</comment>
<comment type="interaction">
    <interactant intactId="EBI-963338">
        <id>O95297</id>
    </interactant>
    <interactant intactId="EBI-11956541">
        <id>Q9GZY8-5</id>
        <label>MFF</label>
    </interactant>
    <organismsDiffer>false</organismsDiffer>
    <experiments>3</experiments>
</comment>
<comment type="interaction">
    <interactant intactId="EBI-963338">
        <id>O95297</id>
    </interactant>
    <interactant intactId="EBI-297779">
        <id>Q06124</id>
        <label>PTPN11</label>
    </interactant>
    <organismsDiffer>false</organismsDiffer>
    <experiments>5</experiments>
</comment>
<comment type="subcellular location">
    <subcellularLocation>
        <location evidence="15">Membrane</location>
        <topology evidence="15">Single-pass type I membrane protein</topology>
    </subcellularLocation>
</comment>
<comment type="alternative products">
    <event type="alternative splicing"/>
    <isoform>
        <id>O95297-1</id>
        <name>1</name>
        <name>MPZL1a</name>
        <sequence type="displayed"/>
    </isoform>
    <isoform>
        <id>O95297-2</id>
        <name>2</name>
        <name>PZR1a</name>
        <sequence type="described" ref="VSP_019343"/>
    </isoform>
    <isoform>
        <id>O95297-3</id>
        <name>3</name>
        <name>PZR1b</name>
        <sequence type="described" ref="VSP_019344"/>
    </isoform>
    <isoform>
        <id>O95297-4</id>
        <name>4</name>
        <name>MPZL1b</name>
        <sequence type="described" ref="VSP_019342"/>
    </isoform>
    <isoform>
        <id>O95297-5</id>
        <name>5</name>
        <sequence type="described" ref="VSP_043341"/>
    </isoform>
</comment>
<comment type="tissue specificity">
    <text evidence="6 7 10">Widely expressed with highest levels in heart, placenta, kidney and pancreas. Isoform 3 is relatively abundant in hematopoietic tissues and fetal liver. Isoform 1 and isoform 3 are expressed in CD14- PB monocytes and pre-B cell progenitors. Isoform 3 appears to be the major isoform in CD34- promyelocytic and promonocytic cells. During differentiation in monocytic cells, the expression level of isoform 3 decreases and that of isoform 1 increases. Isoform 1 is prominent in stromal cells and, to a lesser extent, in umbilical vein endothelial cells and erythroid progenitors. Isoform 2 is expressed in a erythroid progenitor cell line.</text>
</comment>
<comment type="domain">
    <text>Contains 2 copies of a cytoplasmic motif that is referred to as the immunoreceptor tyrosine-based inhibitor motif (ITIM). This motif is involved in modulation of cellular responses. The phosphorylated ITIM motif can bind the SH2 domain of several SH2-containing phosphatases.</text>
</comment>
<comment type="PTM">
    <text evidence="4 5 10">Phosphorylated on tyrosine residues upon stimulation with pervanadate and concanavalin-A (ConA). Phosphorylation at Tyr-241 and Tyr-263 is required for interaction with PTPN11/SHP-2. Dephosphorylated by PTPN11/SHP-2 (in vitro).</text>
</comment>
<comment type="PTM">
    <text evidence="5 8 9 10">N-glycosylated. N-glycosylation is required for concanavalin A binding (PubMed:30392906).</text>
</comment>
<comment type="similarity">
    <text evidence="15">Belongs to the myelin P0 protein family.</text>
</comment>
<evidence type="ECO:0000255" key="1"/>
<evidence type="ECO:0000255" key="2">
    <source>
        <dbReference type="PROSITE-ProRule" id="PRU00114"/>
    </source>
</evidence>
<evidence type="ECO:0000256" key="3">
    <source>
        <dbReference type="SAM" id="MobiDB-lite"/>
    </source>
</evidence>
<evidence type="ECO:0000269" key="4">
    <source>
    </source>
</evidence>
<evidence type="ECO:0000269" key="5">
    <source>
    </source>
</evidence>
<evidence type="ECO:0000269" key="6">
    <source>
    </source>
</evidence>
<evidence type="ECO:0000269" key="7">
    <source>
    </source>
</evidence>
<evidence type="ECO:0000269" key="8">
    <source>
    </source>
</evidence>
<evidence type="ECO:0000269" key="9">
    <source>
    </source>
</evidence>
<evidence type="ECO:0000269" key="10">
    <source>
    </source>
</evidence>
<evidence type="ECO:0000303" key="11">
    <source>
    </source>
</evidence>
<evidence type="ECO:0000303" key="12">
    <source>
    </source>
</evidence>
<evidence type="ECO:0000303" key="13">
    <source>
    </source>
</evidence>
<evidence type="ECO:0000303" key="14">
    <source>
    </source>
</evidence>
<evidence type="ECO:0000305" key="15"/>
<evidence type="ECO:0007744" key="16">
    <source>
        <dbReference type="PDB" id="6IGO"/>
    </source>
</evidence>
<evidence type="ECO:0007744" key="17">
    <source>
        <dbReference type="PDB" id="6IGT"/>
    </source>
</evidence>
<evidence type="ECO:0007744" key="18">
    <source>
        <dbReference type="PDB" id="6IGW"/>
    </source>
</evidence>
<evidence type="ECO:0007744" key="19">
    <source>
    </source>
</evidence>
<evidence type="ECO:0007744" key="20">
    <source>
    </source>
</evidence>
<evidence type="ECO:0007744" key="21">
    <source>
    </source>
</evidence>
<evidence type="ECO:0007744" key="22">
    <source>
    </source>
</evidence>
<evidence type="ECO:0007744" key="23">
    <source>
    </source>
</evidence>
<evidence type="ECO:0007829" key="24">
    <source>
        <dbReference type="PDB" id="6IGO"/>
    </source>
</evidence>
<evidence type="ECO:0007829" key="25">
    <source>
        <dbReference type="PDB" id="6IGW"/>
    </source>
</evidence>
<sequence length="269" mass="29082">MAASAGAGAVIAAPDSRRWLWSVLAAALGLLTAGVSALEVYTPKEIFVANGTQGKLTCKFKSTSTTGGLTSVSWSFQPEGADTTVSFFHYSQGQVYLGNYPPFKDRISWAGDLDKKDASINIENMQFIHNGTYICDVKNPPDIVVQPGHIRLYVVEKENLPVFPVWVVVGIVTAVVLGLTLLISMILAVLYRRKNSKRDYTGCSTSESLSPVKQAPRKSPSDTEGLVKSLPSGSHQGPVIYAQLDHSGGHHSDKINKSESVVYADIRKN</sequence>
<keyword id="KW-0002">3D-structure</keyword>
<keyword id="KW-0025">Alternative splicing</keyword>
<keyword id="KW-0903">Direct protein sequencing</keyword>
<keyword id="KW-1015">Disulfide bond</keyword>
<keyword id="KW-0325">Glycoprotein</keyword>
<keyword id="KW-0393">Immunoglobulin domain</keyword>
<keyword id="KW-0472">Membrane</keyword>
<keyword id="KW-0597">Phosphoprotein</keyword>
<keyword id="KW-1267">Proteomics identification</keyword>
<keyword id="KW-1185">Reference proteome</keyword>
<keyword id="KW-0732">Signal</keyword>
<keyword id="KW-0812">Transmembrane</keyword>
<keyword id="KW-1133">Transmembrane helix</keyword>
<accession>O95297</accession>
<accession>B2REB9</accession>
<accession>B2REC0</accession>
<accession>Q5R332</accession>
<accession>Q8IX11</accession>
<accession>Q9BWZ3</accession>
<accession>Q9NYK4</accession>
<accession>Q9UL20</accession>
<feature type="signal peptide" evidence="1">
    <location>
        <begin position="1"/>
        <end position="35"/>
    </location>
</feature>
<feature type="chain" id="PRO_0000240335" description="Myelin protein zero-like protein 1">
    <location>
        <begin position="36"/>
        <end position="269"/>
    </location>
</feature>
<feature type="topological domain" description="Extracellular" evidence="1">
    <location>
        <begin position="36"/>
        <end position="162"/>
    </location>
</feature>
<feature type="transmembrane region" description="Helical" evidence="1">
    <location>
        <begin position="163"/>
        <end position="183"/>
    </location>
</feature>
<feature type="topological domain" description="Cytoplasmic" evidence="1">
    <location>
        <begin position="184"/>
        <end position="269"/>
    </location>
</feature>
<feature type="domain" description="Ig-like V-type">
    <location>
        <begin position="36"/>
        <end position="146"/>
    </location>
</feature>
<feature type="region of interest" description="Disordered" evidence="3">
    <location>
        <begin position="199"/>
        <end position="238"/>
    </location>
</feature>
<feature type="short sequence motif" description="ITIM motif 1">
    <location>
        <begin position="239"/>
        <end position="244"/>
    </location>
</feature>
<feature type="short sequence motif" description="ITIM motif 2">
    <location>
        <begin position="261"/>
        <end position="266"/>
    </location>
</feature>
<feature type="compositionally biased region" description="Polar residues" evidence="3">
    <location>
        <begin position="202"/>
        <end position="211"/>
    </location>
</feature>
<feature type="modified residue" description="Phosphoserine" evidence="23">
    <location>
        <position position="204"/>
    </location>
</feature>
<feature type="modified residue" description="Phosphoserine" evidence="23">
    <location>
        <position position="206"/>
    </location>
</feature>
<feature type="modified residue" description="Phosphoserine" evidence="19 23">
    <location>
        <position position="208"/>
    </location>
</feature>
<feature type="modified residue" description="Phosphoserine" evidence="19 21 22 23">
    <location>
        <position position="210"/>
    </location>
</feature>
<feature type="modified residue" description="Phosphoserine" evidence="19 21 23">
    <location>
        <position position="219"/>
    </location>
</feature>
<feature type="modified residue" description="Phosphoserine" evidence="21 22 23">
    <location>
        <position position="221"/>
    </location>
</feature>
<feature type="modified residue" description="Phosphotyrosine" evidence="4 20">
    <location>
        <position position="241"/>
    </location>
</feature>
<feature type="modified residue" description="Phosphoserine" evidence="19 23">
    <location>
        <position position="260"/>
    </location>
</feature>
<feature type="modified residue" description="Phosphotyrosine" evidence="4 19 20 21 23">
    <location>
        <position position="263"/>
    </location>
</feature>
<feature type="glycosylation site" description="N-linked (GlcNAc...) asparagine" evidence="8 9">
    <location>
        <position position="50"/>
    </location>
</feature>
<feature type="glycosylation site" description="N-linked (GlcNAc...) asparagine" evidence="9">
    <location>
        <position position="130"/>
    </location>
</feature>
<feature type="disulfide bond" evidence="2 9 16">
    <location>
        <begin position="58"/>
        <end position="135"/>
    </location>
</feature>
<feature type="splice variant" id="VSP_019342" description="In isoform 4." evidence="11">
    <location>
        <begin position="1"/>
        <end position="124"/>
    </location>
</feature>
<feature type="splice variant" id="VSP_019343" description="In isoform 2." evidence="15">
    <location>
        <position position="42"/>
    </location>
</feature>
<feature type="splice variant" id="VSP_043341" description="In isoform 5." evidence="13">
    <location>
        <begin position="87"/>
        <end position="236"/>
    </location>
</feature>
<feature type="splice variant" id="VSP_019344" description="In isoform 3." evidence="12 14">
    <original>CSTSESLSPVKQAPRKSPSDTEGLVKSLPSGSHQGPVIYAQLDHSGGHHSDKINKSESVVYADIRKN</original>
    <variation>AQSYMHS</variation>
    <location>
        <begin position="203"/>
        <end position="269"/>
    </location>
</feature>
<feature type="mutagenesis site" description="Significantly decreases phosphorylation. Complete loss of phosphorylation; when associated with F-263." evidence="4">
    <original>Y</original>
    <variation>F</variation>
    <location>
        <position position="241"/>
    </location>
</feature>
<feature type="mutagenesis site" description="Significantly decreases phosphorylation. Complete loss of phosphorylation; when associated with F-241." evidence="4">
    <original>Y</original>
    <variation>F</variation>
    <location>
        <position position="263"/>
    </location>
</feature>
<feature type="sequence conflict" description="In Ref. 4; AAO14646." evidence="15" ref="4">
    <original>T</original>
    <variation>A</variation>
    <location>
        <position position="42"/>
    </location>
</feature>
<feature type="sequence conflict" description="In Ref. 4; AAO14646." evidence="15" ref="4">
    <original>L</original>
    <variation>I</variation>
    <location>
        <position position="177"/>
    </location>
</feature>
<feature type="strand" evidence="25">
    <location>
        <begin position="39"/>
        <end position="41"/>
    </location>
</feature>
<feature type="strand" evidence="25">
    <location>
        <begin position="44"/>
        <end position="49"/>
    </location>
</feature>
<feature type="strand" evidence="25">
    <location>
        <begin position="54"/>
        <end position="56"/>
    </location>
</feature>
<feature type="strand" evidence="25">
    <location>
        <begin position="59"/>
        <end position="61"/>
    </location>
</feature>
<feature type="strand" evidence="24">
    <location>
        <begin position="67"/>
        <end position="69"/>
    </location>
</feature>
<feature type="strand" evidence="25">
    <location>
        <begin position="71"/>
        <end position="78"/>
    </location>
</feature>
<feature type="strand" evidence="25">
    <location>
        <begin position="85"/>
        <end position="91"/>
    </location>
</feature>
<feature type="strand" evidence="25">
    <location>
        <begin position="94"/>
        <end position="97"/>
    </location>
</feature>
<feature type="helix" evidence="25">
    <location>
        <begin position="101"/>
        <end position="103"/>
    </location>
</feature>
<feature type="turn" evidence="25">
    <location>
        <begin position="104"/>
        <end position="106"/>
    </location>
</feature>
<feature type="strand" evidence="25">
    <location>
        <begin position="107"/>
        <end position="109"/>
    </location>
</feature>
<feature type="helix" evidence="25">
    <location>
        <begin position="113"/>
        <end position="115"/>
    </location>
</feature>
<feature type="strand" evidence="25">
    <location>
        <begin position="120"/>
        <end position="124"/>
    </location>
</feature>
<feature type="helix" evidence="25">
    <location>
        <begin position="127"/>
        <end position="129"/>
    </location>
</feature>
<feature type="strand" evidence="25">
    <location>
        <begin position="131"/>
        <end position="138"/>
    </location>
</feature>
<feature type="strand" evidence="25">
    <location>
        <begin position="140"/>
        <end position="144"/>
    </location>
</feature>
<feature type="strand" evidence="25">
    <location>
        <begin position="146"/>
        <end position="155"/>
    </location>
</feature>
<proteinExistence type="evidence at protein level"/>
<dbReference type="EMBL" id="AF087020">
    <property type="protein sequence ID" value="AAC72231.1"/>
    <property type="molecule type" value="mRNA"/>
</dbReference>
<dbReference type="EMBL" id="AF092424">
    <property type="protein sequence ID" value="AAD55346.1"/>
    <property type="molecule type" value="mRNA"/>
</dbReference>
<dbReference type="EMBL" id="AF092425">
    <property type="protein sequence ID" value="AAD55347.1"/>
    <property type="molecule type" value="mRNA"/>
</dbReference>
<dbReference type="EMBL" id="AF095726">
    <property type="protein sequence ID" value="AAF00083.1"/>
    <property type="molecule type" value="mRNA"/>
</dbReference>
<dbReference type="EMBL" id="AF095727">
    <property type="protein sequence ID" value="AAF00084.1"/>
    <property type="molecule type" value="mRNA"/>
</dbReference>
<dbReference type="EMBL" id="AF239756">
    <property type="protein sequence ID" value="AAF63499.1"/>
    <property type="molecule type" value="mRNA"/>
</dbReference>
<dbReference type="EMBL" id="AF478447">
    <property type="protein sequence ID" value="AAO14645.1"/>
    <property type="molecule type" value="mRNA"/>
</dbReference>
<dbReference type="EMBL" id="AF478448">
    <property type="protein sequence ID" value="AAO14647.1"/>
    <property type="molecule type" value="Genomic_DNA"/>
</dbReference>
<dbReference type="EMBL" id="AF478448">
    <property type="protein sequence ID" value="AAO14646.1"/>
    <property type="molecule type" value="Genomic_DNA"/>
</dbReference>
<dbReference type="EMBL" id="AY359019">
    <property type="protein sequence ID" value="AAQ89378.1"/>
    <property type="molecule type" value="mRNA"/>
</dbReference>
<dbReference type="EMBL" id="AK297112">
    <property type="protein sequence ID" value="BAH12501.1"/>
    <property type="molecule type" value="mRNA"/>
</dbReference>
<dbReference type="EMBL" id="CR542160">
    <property type="protein sequence ID" value="CAG46957.1"/>
    <property type="molecule type" value="mRNA"/>
</dbReference>
<dbReference type="EMBL" id="AL356532">
    <property type="status" value="NOT_ANNOTATED_CDS"/>
    <property type="molecule type" value="Genomic_DNA"/>
</dbReference>
<dbReference type="EMBL" id="Z99943">
    <property type="status" value="NOT_ANNOTATED_CDS"/>
    <property type="molecule type" value="Genomic_DNA"/>
</dbReference>
<dbReference type="EMBL" id="CH471067">
    <property type="protein sequence ID" value="EAW90800.1"/>
    <property type="molecule type" value="Genomic_DNA"/>
</dbReference>
<dbReference type="EMBL" id="BC007881">
    <property type="protein sequence ID" value="AAH07881.1"/>
    <property type="molecule type" value="mRNA"/>
</dbReference>
<dbReference type="CCDS" id="CCDS1264.1">
    <molecule id="O95297-1"/>
</dbReference>
<dbReference type="CCDS" id="CCDS44273.1">
    <molecule id="O95297-3"/>
</dbReference>
<dbReference type="CCDS" id="CCDS53425.1">
    <molecule id="O95297-5"/>
</dbReference>
<dbReference type="RefSeq" id="NP_001139663.1">
    <molecule id="O95297-5"/>
    <property type="nucleotide sequence ID" value="NM_001146191.2"/>
</dbReference>
<dbReference type="RefSeq" id="NP_003944.1">
    <molecule id="O95297-1"/>
    <property type="nucleotide sequence ID" value="NM_003953.6"/>
</dbReference>
<dbReference type="RefSeq" id="NP_078845.3">
    <molecule id="O95297-3"/>
    <property type="nucleotide sequence ID" value="NM_024569.4"/>
</dbReference>
<dbReference type="RefSeq" id="XP_047289566.1">
    <molecule id="O95297-4"/>
    <property type="nucleotide sequence ID" value="XM_047433610.1"/>
</dbReference>
<dbReference type="RefSeq" id="XP_054195470.1">
    <molecule id="O95297-1"/>
    <property type="nucleotide sequence ID" value="XM_054339495.1"/>
</dbReference>
<dbReference type="RefSeq" id="XP_054195471.1">
    <molecule id="O95297-1"/>
    <property type="nucleotide sequence ID" value="XM_054339496.1"/>
</dbReference>
<dbReference type="RefSeq" id="XP_054195472.1">
    <molecule id="O95297-1"/>
    <property type="nucleotide sequence ID" value="XM_054339497.1"/>
</dbReference>
<dbReference type="RefSeq" id="XP_054195473.1">
    <molecule id="O95297-3"/>
    <property type="nucleotide sequence ID" value="XM_054339498.1"/>
</dbReference>
<dbReference type="RefSeq" id="XP_054195474.1">
    <molecule id="O95297-4"/>
    <property type="nucleotide sequence ID" value="XM_054339499.1"/>
</dbReference>
<dbReference type="PDB" id="6IGO">
    <property type="method" value="X-ray"/>
    <property type="resolution" value="2.75 A"/>
    <property type="chains" value="A/B/C/D/E/F=36-162"/>
</dbReference>
<dbReference type="PDB" id="6IGT">
    <property type="method" value="X-ray"/>
    <property type="resolution" value="2.40 A"/>
    <property type="chains" value="A/B/C/D=36-162"/>
</dbReference>
<dbReference type="PDB" id="6IGW">
    <property type="method" value="X-ray"/>
    <property type="resolution" value="1.98 A"/>
    <property type="chains" value="A=36-162"/>
</dbReference>
<dbReference type="PDBsum" id="6IGO"/>
<dbReference type="PDBsum" id="6IGT"/>
<dbReference type="PDBsum" id="6IGW"/>
<dbReference type="SMR" id="O95297"/>
<dbReference type="BioGRID" id="114486">
    <property type="interactions" value="136"/>
</dbReference>
<dbReference type="FunCoup" id="O95297">
    <property type="interactions" value="1381"/>
</dbReference>
<dbReference type="IntAct" id="O95297">
    <property type="interactions" value="93"/>
</dbReference>
<dbReference type="MINT" id="O95297"/>
<dbReference type="STRING" id="9606.ENSP00000352513"/>
<dbReference type="GlyConnect" id="1527">
    <property type="glycosylation" value="31 N-Linked glycans (2 sites)"/>
</dbReference>
<dbReference type="GlyCosmos" id="O95297">
    <property type="glycosylation" value="2 sites, 31 glycans"/>
</dbReference>
<dbReference type="GlyGen" id="O95297">
    <property type="glycosylation" value="7 sites, 54 N-linked glycans (2 sites), 1 O-linked glycan (1 site)"/>
</dbReference>
<dbReference type="iPTMnet" id="O95297"/>
<dbReference type="PhosphoSitePlus" id="O95297"/>
<dbReference type="SwissPalm" id="O95297"/>
<dbReference type="BioMuta" id="MPZL1"/>
<dbReference type="jPOST" id="O95297"/>
<dbReference type="MassIVE" id="O95297"/>
<dbReference type="PaxDb" id="9606-ENSP00000352513"/>
<dbReference type="PeptideAtlas" id="O95297"/>
<dbReference type="ProteomicsDB" id="50793">
    <molecule id="O95297-1"/>
</dbReference>
<dbReference type="ProteomicsDB" id="50794">
    <molecule id="O95297-2"/>
</dbReference>
<dbReference type="ProteomicsDB" id="50795">
    <molecule id="O95297-3"/>
</dbReference>
<dbReference type="ProteomicsDB" id="50796">
    <molecule id="O95297-4"/>
</dbReference>
<dbReference type="ProteomicsDB" id="50797">
    <molecule id="O95297-5"/>
</dbReference>
<dbReference type="Pumba" id="O95297"/>
<dbReference type="TopDownProteomics" id="O95297-1">
    <molecule id="O95297-1"/>
</dbReference>
<dbReference type="Antibodypedia" id="34343">
    <property type="antibodies" value="131 antibodies from 28 providers"/>
</dbReference>
<dbReference type="DNASU" id="9019"/>
<dbReference type="Ensembl" id="ENST00000359523.7">
    <molecule id="O95297-1"/>
    <property type="protein sequence ID" value="ENSP00000352513.2"/>
    <property type="gene ID" value="ENSG00000197965.12"/>
</dbReference>
<dbReference type="Ensembl" id="ENST00000392121.7">
    <molecule id="O95297-5"/>
    <property type="protein sequence ID" value="ENSP00000375968.3"/>
    <property type="gene ID" value="ENSG00000197965.12"/>
</dbReference>
<dbReference type="Ensembl" id="ENST00000474859.5">
    <molecule id="O95297-3"/>
    <property type="protein sequence ID" value="ENSP00000420455.1"/>
    <property type="gene ID" value="ENSG00000197965.12"/>
</dbReference>
<dbReference type="GeneID" id="9019"/>
<dbReference type="KEGG" id="hsa:9019"/>
<dbReference type="MANE-Select" id="ENST00000359523.7">
    <property type="protein sequence ID" value="ENSP00000352513.2"/>
    <property type="RefSeq nucleotide sequence ID" value="NM_003953.6"/>
    <property type="RefSeq protein sequence ID" value="NP_003944.1"/>
</dbReference>
<dbReference type="UCSC" id="uc001geo.3">
    <molecule id="O95297-1"/>
    <property type="organism name" value="human"/>
</dbReference>
<dbReference type="AGR" id="HGNC:7226"/>
<dbReference type="CTD" id="9019"/>
<dbReference type="DisGeNET" id="9019"/>
<dbReference type="GeneCards" id="MPZL1"/>
<dbReference type="HGNC" id="HGNC:7226">
    <property type="gene designation" value="MPZL1"/>
</dbReference>
<dbReference type="HPA" id="ENSG00000197965">
    <property type="expression patterns" value="Low tissue specificity"/>
</dbReference>
<dbReference type="MIM" id="604376">
    <property type="type" value="gene"/>
</dbReference>
<dbReference type="neXtProt" id="NX_O95297"/>
<dbReference type="OpenTargets" id="ENSG00000197965"/>
<dbReference type="PharmGKB" id="PA30931"/>
<dbReference type="VEuPathDB" id="HostDB:ENSG00000197965"/>
<dbReference type="eggNOG" id="ENOG502QUEQ">
    <property type="taxonomic scope" value="Eukaryota"/>
</dbReference>
<dbReference type="GeneTree" id="ENSGT01030000234556"/>
<dbReference type="HOGENOM" id="CLU_090350_3_0_1"/>
<dbReference type="InParanoid" id="O95297"/>
<dbReference type="OMA" id="RDYTGCN"/>
<dbReference type="OrthoDB" id="8831214at2759"/>
<dbReference type="PAN-GO" id="O95297">
    <property type="GO annotations" value="1 GO annotation based on evolutionary models"/>
</dbReference>
<dbReference type="PhylomeDB" id="O95297"/>
<dbReference type="TreeFam" id="TF331728"/>
<dbReference type="PathwayCommons" id="O95297"/>
<dbReference type="SignaLink" id="O95297"/>
<dbReference type="SIGNOR" id="O95297"/>
<dbReference type="BioGRID-ORCS" id="9019">
    <property type="hits" value="28 hits in 1158 CRISPR screens"/>
</dbReference>
<dbReference type="ChiTaRS" id="MPZL1">
    <property type="organism name" value="human"/>
</dbReference>
<dbReference type="GeneWiki" id="MPZL1"/>
<dbReference type="GenomeRNAi" id="9019"/>
<dbReference type="Pharos" id="O95297">
    <property type="development level" value="Tbio"/>
</dbReference>
<dbReference type="PRO" id="PR:O95297"/>
<dbReference type="Proteomes" id="UP000005640">
    <property type="component" value="Chromosome 1"/>
</dbReference>
<dbReference type="RNAct" id="O95297">
    <property type="molecule type" value="protein"/>
</dbReference>
<dbReference type="Bgee" id="ENSG00000197965">
    <property type="expression patterns" value="Expressed in stromal cell of endometrium and 195 other cell types or tissues"/>
</dbReference>
<dbReference type="ExpressionAtlas" id="O95297">
    <property type="expression patterns" value="baseline and differential"/>
</dbReference>
<dbReference type="GO" id="GO:0009986">
    <property type="term" value="C:cell surface"/>
    <property type="evidence" value="ECO:0007005"/>
    <property type="project" value="UniProtKB"/>
</dbReference>
<dbReference type="GO" id="GO:0005925">
    <property type="term" value="C:focal adhesion"/>
    <property type="evidence" value="ECO:0007005"/>
    <property type="project" value="UniProtKB"/>
</dbReference>
<dbReference type="GO" id="GO:0005886">
    <property type="term" value="C:plasma membrane"/>
    <property type="evidence" value="ECO:0000318"/>
    <property type="project" value="GO_Central"/>
</dbReference>
<dbReference type="GO" id="GO:0005198">
    <property type="term" value="F:structural molecule activity"/>
    <property type="evidence" value="ECO:0000304"/>
    <property type="project" value="ProtInc"/>
</dbReference>
<dbReference type="GO" id="GO:0007169">
    <property type="term" value="P:cell surface receptor protein tyrosine kinase signaling pathway"/>
    <property type="evidence" value="ECO:0000304"/>
    <property type="project" value="ProtInc"/>
</dbReference>
<dbReference type="GO" id="GO:0007267">
    <property type="term" value="P:cell-cell signaling"/>
    <property type="evidence" value="ECO:0000304"/>
    <property type="project" value="ProtInc"/>
</dbReference>
<dbReference type="CDD" id="cd05715">
    <property type="entry name" value="IgV_P0-like"/>
    <property type="match status" value="1"/>
</dbReference>
<dbReference type="FunFam" id="2.60.40.10:FF:000193">
    <property type="entry name" value="Myelin protein zero-like 1 like"/>
    <property type="match status" value="1"/>
</dbReference>
<dbReference type="Gene3D" id="2.60.40.10">
    <property type="entry name" value="Immunoglobulins"/>
    <property type="match status" value="1"/>
</dbReference>
<dbReference type="InterPro" id="IPR007110">
    <property type="entry name" value="Ig-like_dom"/>
</dbReference>
<dbReference type="InterPro" id="IPR036179">
    <property type="entry name" value="Ig-like_dom_sf"/>
</dbReference>
<dbReference type="InterPro" id="IPR013783">
    <property type="entry name" value="Ig-like_fold"/>
</dbReference>
<dbReference type="InterPro" id="IPR003599">
    <property type="entry name" value="Ig_sub"/>
</dbReference>
<dbReference type="InterPro" id="IPR013106">
    <property type="entry name" value="Ig_V-set"/>
</dbReference>
<dbReference type="InterPro" id="IPR000920">
    <property type="entry name" value="Myelin_P0-rel"/>
</dbReference>
<dbReference type="PANTHER" id="PTHR13869">
    <property type="entry name" value="MYELIN P0 RELATED"/>
    <property type="match status" value="1"/>
</dbReference>
<dbReference type="PANTHER" id="PTHR13869:SF19">
    <property type="entry name" value="MYELIN PROTEIN ZERO-LIKE PROTEIN 1"/>
    <property type="match status" value="1"/>
</dbReference>
<dbReference type="Pfam" id="PF07686">
    <property type="entry name" value="V-set"/>
    <property type="match status" value="1"/>
</dbReference>
<dbReference type="PRINTS" id="PR00213">
    <property type="entry name" value="MYELINP0"/>
</dbReference>
<dbReference type="SMART" id="SM00409">
    <property type="entry name" value="IG"/>
    <property type="match status" value="1"/>
</dbReference>
<dbReference type="SMART" id="SM00406">
    <property type="entry name" value="IGv"/>
    <property type="match status" value="1"/>
</dbReference>
<dbReference type="SUPFAM" id="SSF48726">
    <property type="entry name" value="Immunoglobulin"/>
    <property type="match status" value="1"/>
</dbReference>
<dbReference type="PROSITE" id="PS50835">
    <property type="entry name" value="IG_LIKE"/>
    <property type="match status" value="1"/>
</dbReference>
<protein>
    <recommendedName>
        <fullName>Myelin protein zero-like protein 1</fullName>
    </recommendedName>
    <alternativeName>
        <fullName>Protein zero-related</fullName>
    </alternativeName>
</protein>
<name>MPZL1_HUMAN</name>
<gene>
    <name type="primary">MPZL1</name>
    <name evidence="14" type="synonym">PZR</name>
    <name type="ORF">UNQ849/PRO1787</name>
</gene>